<comment type="function">
    <text evidence="1">Key enzyme in the regulation of glycerol uptake and metabolism. Catalyzes the phosphorylation of glycerol to yield sn-glycerol 3-phosphate.</text>
</comment>
<comment type="catalytic activity">
    <reaction evidence="1">
        <text>glycerol + ATP = sn-glycerol 3-phosphate + ADP + H(+)</text>
        <dbReference type="Rhea" id="RHEA:21644"/>
        <dbReference type="ChEBI" id="CHEBI:15378"/>
        <dbReference type="ChEBI" id="CHEBI:17754"/>
        <dbReference type="ChEBI" id="CHEBI:30616"/>
        <dbReference type="ChEBI" id="CHEBI:57597"/>
        <dbReference type="ChEBI" id="CHEBI:456216"/>
        <dbReference type="EC" id="2.7.1.30"/>
    </reaction>
</comment>
<comment type="activity regulation">
    <text evidence="1">Inhibited by fructose 1,6-bisphosphate (FBP).</text>
</comment>
<comment type="pathway">
    <text evidence="1">Polyol metabolism; glycerol degradation via glycerol kinase pathway; sn-glycerol 3-phosphate from glycerol: step 1/1.</text>
</comment>
<comment type="similarity">
    <text evidence="1">Belongs to the FGGY kinase family.</text>
</comment>
<sequence>MAKYIIALDQGTTSSRAIIFNHQGEVINISQKDFPQHFPQLGWVEHSPDAIWSTQLSVMQEAIAKARIREHDIAAIGITNQRETTMLWNRKTGEPVYQAIVWQDRRTARYCDTLKEEYGAMIRQKTGLIIDAYFSASKIHWILENVSGARELAEKGDLAFGTVDTWLIWCLTEGKVHVTDPSNASRTMLFNIHTMQWDDELLALFNIPKAILPEVKSSSEIYGYVDSRYIQGGKVPIAGIAGDQQAALFGQMCTKKGMMKNTYGTGCFLLMNTGDKIVTSNNNLLSTVAWKIGDKVTYALEGGVFVGGAVIQWVRDGLRIIRTADAINSLADTVEDNGGVYFVPCMTGMGAPYWDQYARGTIIGITRGTTDAHIARATLEGIALQVHDIVRAMEKDVGEATKEFRVDGGASASNLLMQIQSDIFQFDIVRPKVLETTALGAAYLAGLAIGFWQNTDEIAQQWQQDCTFSPKMPPEKVAHILRYWNKAVKAAQHWIEE</sequence>
<feature type="chain" id="PRO_1000020729" description="Glycerol kinase">
    <location>
        <begin position="1"/>
        <end position="497"/>
    </location>
</feature>
<feature type="binding site" evidence="1">
    <location>
        <position position="12"/>
    </location>
    <ligand>
        <name>ADP</name>
        <dbReference type="ChEBI" id="CHEBI:456216"/>
    </ligand>
</feature>
<feature type="binding site" evidence="1">
    <location>
        <position position="12"/>
    </location>
    <ligand>
        <name>ATP</name>
        <dbReference type="ChEBI" id="CHEBI:30616"/>
    </ligand>
</feature>
<feature type="binding site" evidence="1">
    <location>
        <position position="12"/>
    </location>
    <ligand>
        <name>sn-glycerol 3-phosphate</name>
        <dbReference type="ChEBI" id="CHEBI:57597"/>
    </ligand>
</feature>
<feature type="binding site" evidence="1">
    <location>
        <position position="13"/>
    </location>
    <ligand>
        <name>ATP</name>
        <dbReference type="ChEBI" id="CHEBI:30616"/>
    </ligand>
</feature>
<feature type="binding site" evidence="1">
    <location>
        <position position="14"/>
    </location>
    <ligand>
        <name>ATP</name>
        <dbReference type="ChEBI" id="CHEBI:30616"/>
    </ligand>
</feature>
<feature type="binding site" evidence="1">
    <location>
        <position position="16"/>
    </location>
    <ligand>
        <name>ADP</name>
        <dbReference type="ChEBI" id="CHEBI:456216"/>
    </ligand>
</feature>
<feature type="binding site" evidence="1">
    <location>
        <position position="82"/>
    </location>
    <ligand>
        <name>glycerol</name>
        <dbReference type="ChEBI" id="CHEBI:17754"/>
    </ligand>
</feature>
<feature type="binding site" evidence="1">
    <location>
        <position position="82"/>
    </location>
    <ligand>
        <name>sn-glycerol 3-phosphate</name>
        <dbReference type="ChEBI" id="CHEBI:57597"/>
    </ligand>
</feature>
<feature type="binding site" evidence="1">
    <location>
        <position position="83"/>
    </location>
    <ligand>
        <name>glycerol</name>
        <dbReference type="ChEBI" id="CHEBI:17754"/>
    </ligand>
</feature>
<feature type="binding site" evidence="1">
    <location>
        <position position="83"/>
    </location>
    <ligand>
        <name>sn-glycerol 3-phosphate</name>
        <dbReference type="ChEBI" id="CHEBI:57597"/>
    </ligand>
</feature>
<feature type="binding site" evidence="1">
    <location>
        <position position="133"/>
    </location>
    <ligand>
        <name>glycerol</name>
        <dbReference type="ChEBI" id="CHEBI:17754"/>
    </ligand>
</feature>
<feature type="binding site" evidence="1">
    <location>
        <position position="133"/>
    </location>
    <ligand>
        <name>sn-glycerol 3-phosphate</name>
        <dbReference type="ChEBI" id="CHEBI:57597"/>
    </ligand>
</feature>
<feature type="binding site" evidence="1">
    <location>
        <position position="243"/>
    </location>
    <ligand>
        <name>glycerol</name>
        <dbReference type="ChEBI" id="CHEBI:17754"/>
    </ligand>
</feature>
<feature type="binding site" evidence="1">
    <location>
        <position position="243"/>
    </location>
    <ligand>
        <name>sn-glycerol 3-phosphate</name>
        <dbReference type="ChEBI" id="CHEBI:57597"/>
    </ligand>
</feature>
<feature type="binding site" evidence="1">
    <location>
        <position position="244"/>
    </location>
    <ligand>
        <name>glycerol</name>
        <dbReference type="ChEBI" id="CHEBI:17754"/>
    </ligand>
</feature>
<feature type="binding site" evidence="1">
    <location>
        <position position="265"/>
    </location>
    <ligand>
        <name>ADP</name>
        <dbReference type="ChEBI" id="CHEBI:456216"/>
    </ligand>
</feature>
<feature type="binding site" evidence="1">
    <location>
        <position position="265"/>
    </location>
    <ligand>
        <name>ATP</name>
        <dbReference type="ChEBI" id="CHEBI:30616"/>
    </ligand>
</feature>
<feature type="binding site" evidence="1">
    <location>
        <position position="308"/>
    </location>
    <ligand>
        <name>ADP</name>
        <dbReference type="ChEBI" id="CHEBI:456216"/>
    </ligand>
</feature>
<feature type="binding site" evidence="1">
    <location>
        <position position="308"/>
    </location>
    <ligand>
        <name>ATP</name>
        <dbReference type="ChEBI" id="CHEBI:30616"/>
    </ligand>
</feature>
<feature type="binding site" evidence="1">
    <location>
        <position position="312"/>
    </location>
    <ligand>
        <name>ATP</name>
        <dbReference type="ChEBI" id="CHEBI:30616"/>
    </ligand>
</feature>
<feature type="binding site" evidence="1">
    <location>
        <position position="409"/>
    </location>
    <ligand>
        <name>ADP</name>
        <dbReference type="ChEBI" id="CHEBI:456216"/>
    </ligand>
</feature>
<feature type="binding site" evidence="1">
    <location>
        <position position="409"/>
    </location>
    <ligand>
        <name>ATP</name>
        <dbReference type="ChEBI" id="CHEBI:30616"/>
    </ligand>
</feature>
<dbReference type="EC" id="2.7.1.30" evidence="1"/>
<dbReference type="EMBL" id="CP000513">
    <property type="protein sequence ID" value="ABQ13570.1"/>
    <property type="molecule type" value="Genomic_DNA"/>
</dbReference>
<dbReference type="RefSeq" id="WP_011927960.1">
    <property type="nucleotide sequence ID" value="NC_009446.1"/>
</dbReference>
<dbReference type="SMR" id="A5EWH1"/>
<dbReference type="STRING" id="246195.DNO_0213"/>
<dbReference type="KEGG" id="dno:DNO_0213"/>
<dbReference type="eggNOG" id="COG0554">
    <property type="taxonomic scope" value="Bacteria"/>
</dbReference>
<dbReference type="HOGENOM" id="CLU_009281_2_3_6"/>
<dbReference type="OrthoDB" id="9805576at2"/>
<dbReference type="UniPathway" id="UPA00618">
    <property type="reaction ID" value="UER00672"/>
</dbReference>
<dbReference type="Proteomes" id="UP000000248">
    <property type="component" value="Chromosome"/>
</dbReference>
<dbReference type="GO" id="GO:0005829">
    <property type="term" value="C:cytosol"/>
    <property type="evidence" value="ECO:0007669"/>
    <property type="project" value="TreeGrafter"/>
</dbReference>
<dbReference type="GO" id="GO:0005524">
    <property type="term" value="F:ATP binding"/>
    <property type="evidence" value="ECO:0007669"/>
    <property type="project" value="UniProtKB-UniRule"/>
</dbReference>
<dbReference type="GO" id="GO:0004370">
    <property type="term" value="F:glycerol kinase activity"/>
    <property type="evidence" value="ECO:0000250"/>
    <property type="project" value="UniProtKB"/>
</dbReference>
<dbReference type="GO" id="GO:0019563">
    <property type="term" value="P:glycerol catabolic process"/>
    <property type="evidence" value="ECO:0007669"/>
    <property type="project" value="UniProtKB-UniRule"/>
</dbReference>
<dbReference type="GO" id="GO:0006071">
    <property type="term" value="P:glycerol metabolic process"/>
    <property type="evidence" value="ECO:0000250"/>
    <property type="project" value="UniProtKB"/>
</dbReference>
<dbReference type="GO" id="GO:0006072">
    <property type="term" value="P:glycerol-3-phosphate metabolic process"/>
    <property type="evidence" value="ECO:0007669"/>
    <property type="project" value="InterPro"/>
</dbReference>
<dbReference type="CDD" id="cd07786">
    <property type="entry name" value="FGGY_EcGK_like"/>
    <property type="match status" value="1"/>
</dbReference>
<dbReference type="FunFam" id="3.30.420.40:FF:000007">
    <property type="entry name" value="Glycerol kinase"/>
    <property type="match status" value="1"/>
</dbReference>
<dbReference type="FunFam" id="3.30.420.40:FF:000008">
    <property type="entry name" value="Glycerol kinase"/>
    <property type="match status" value="1"/>
</dbReference>
<dbReference type="Gene3D" id="3.30.420.40">
    <property type="match status" value="2"/>
</dbReference>
<dbReference type="HAMAP" id="MF_00186">
    <property type="entry name" value="Glycerol_kin"/>
    <property type="match status" value="1"/>
</dbReference>
<dbReference type="InterPro" id="IPR043129">
    <property type="entry name" value="ATPase_NBD"/>
</dbReference>
<dbReference type="InterPro" id="IPR000577">
    <property type="entry name" value="Carb_kinase_FGGY"/>
</dbReference>
<dbReference type="InterPro" id="IPR018483">
    <property type="entry name" value="Carb_kinase_FGGY_CS"/>
</dbReference>
<dbReference type="InterPro" id="IPR018485">
    <property type="entry name" value="FGGY_C"/>
</dbReference>
<dbReference type="InterPro" id="IPR018484">
    <property type="entry name" value="FGGY_N"/>
</dbReference>
<dbReference type="InterPro" id="IPR005999">
    <property type="entry name" value="Glycerol_kin"/>
</dbReference>
<dbReference type="NCBIfam" id="TIGR01311">
    <property type="entry name" value="glycerol_kin"/>
    <property type="match status" value="1"/>
</dbReference>
<dbReference type="NCBIfam" id="NF000756">
    <property type="entry name" value="PRK00047.1"/>
    <property type="match status" value="1"/>
</dbReference>
<dbReference type="PANTHER" id="PTHR10196:SF69">
    <property type="entry name" value="GLYCEROL KINASE"/>
    <property type="match status" value="1"/>
</dbReference>
<dbReference type="PANTHER" id="PTHR10196">
    <property type="entry name" value="SUGAR KINASE"/>
    <property type="match status" value="1"/>
</dbReference>
<dbReference type="Pfam" id="PF02782">
    <property type="entry name" value="FGGY_C"/>
    <property type="match status" value="1"/>
</dbReference>
<dbReference type="Pfam" id="PF00370">
    <property type="entry name" value="FGGY_N"/>
    <property type="match status" value="1"/>
</dbReference>
<dbReference type="PIRSF" id="PIRSF000538">
    <property type="entry name" value="GlpK"/>
    <property type="match status" value="1"/>
</dbReference>
<dbReference type="SUPFAM" id="SSF53067">
    <property type="entry name" value="Actin-like ATPase domain"/>
    <property type="match status" value="2"/>
</dbReference>
<dbReference type="PROSITE" id="PS00933">
    <property type="entry name" value="FGGY_KINASES_1"/>
    <property type="match status" value="1"/>
</dbReference>
<dbReference type="PROSITE" id="PS00445">
    <property type="entry name" value="FGGY_KINASES_2"/>
    <property type="match status" value="1"/>
</dbReference>
<keyword id="KW-0067">ATP-binding</keyword>
<keyword id="KW-0319">Glycerol metabolism</keyword>
<keyword id="KW-0418">Kinase</keyword>
<keyword id="KW-0547">Nucleotide-binding</keyword>
<keyword id="KW-1185">Reference proteome</keyword>
<keyword id="KW-0808">Transferase</keyword>
<evidence type="ECO:0000255" key="1">
    <source>
        <dbReference type="HAMAP-Rule" id="MF_00186"/>
    </source>
</evidence>
<organism>
    <name type="scientific">Dichelobacter nodosus (strain VCS1703A)</name>
    <dbReference type="NCBI Taxonomy" id="246195"/>
    <lineage>
        <taxon>Bacteria</taxon>
        <taxon>Pseudomonadati</taxon>
        <taxon>Pseudomonadota</taxon>
        <taxon>Gammaproteobacteria</taxon>
        <taxon>Cardiobacteriales</taxon>
        <taxon>Cardiobacteriaceae</taxon>
        <taxon>Dichelobacter</taxon>
    </lineage>
</organism>
<reference key="1">
    <citation type="journal article" date="2007" name="Nat. Biotechnol.">
        <title>Genome sequence and identification of candidate vaccine antigens from the animal pathogen Dichelobacter nodosus.</title>
        <authorList>
            <person name="Myers G.S.A."/>
            <person name="Parker D."/>
            <person name="Al-Hasani K."/>
            <person name="Kennan R.M."/>
            <person name="Seemann T."/>
            <person name="Ren Q."/>
            <person name="Badger J.H."/>
            <person name="Selengut J.D."/>
            <person name="Deboy R.T."/>
            <person name="Tettelin H."/>
            <person name="Boyce J.D."/>
            <person name="McCarl V.P."/>
            <person name="Han X."/>
            <person name="Nelson W.C."/>
            <person name="Madupu R."/>
            <person name="Mohamoud Y."/>
            <person name="Holley T."/>
            <person name="Fedorova N."/>
            <person name="Khouri H."/>
            <person name="Bottomley S.P."/>
            <person name="Whittington R.J."/>
            <person name="Adler B."/>
            <person name="Songer J.G."/>
            <person name="Rood J.I."/>
            <person name="Paulsen I.T."/>
        </authorList>
    </citation>
    <scope>NUCLEOTIDE SEQUENCE [LARGE SCALE GENOMIC DNA]</scope>
    <source>
        <strain>VCS1703A</strain>
    </source>
</reference>
<protein>
    <recommendedName>
        <fullName evidence="1">Glycerol kinase</fullName>
        <ecNumber evidence="1">2.7.1.30</ecNumber>
    </recommendedName>
    <alternativeName>
        <fullName evidence="1">ATP:glycerol 3-phosphotransferase</fullName>
    </alternativeName>
    <alternativeName>
        <fullName evidence="1">Glycerokinase</fullName>
        <shortName evidence="1">GK</shortName>
    </alternativeName>
</protein>
<gene>
    <name evidence="1" type="primary">glpK</name>
    <name type="ordered locus">DNO_0213</name>
</gene>
<name>GLPK_DICNV</name>
<proteinExistence type="inferred from homology"/>
<accession>A5EWH1</accession>